<feature type="chain" id="PRO_0000117149" description="tRNA uridine 5-carboxymethylaminomethyl modification enzyme MnmG">
    <location>
        <begin position="1"/>
        <end position="625"/>
    </location>
</feature>
<feature type="binding site" evidence="1">
    <location>
        <begin position="11"/>
        <end position="16"/>
    </location>
    <ligand>
        <name>FAD</name>
        <dbReference type="ChEBI" id="CHEBI:57692"/>
    </ligand>
</feature>
<feature type="binding site" evidence="1">
    <location>
        <begin position="271"/>
        <end position="285"/>
    </location>
    <ligand>
        <name>NAD(+)</name>
        <dbReference type="ChEBI" id="CHEBI:57540"/>
    </ligand>
</feature>
<keyword id="KW-0963">Cytoplasm</keyword>
<keyword id="KW-0274">FAD</keyword>
<keyword id="KW-0285">Flavoprotein</keyword>
<keyword id="KW-0520">NAD</keyword>
<keyword id="KW-1185">Reference proteome</keyword>
<keyword id="KW-0819">tRNA processing</keyword>
<accession>Q7MTG9</accession>
<gene>
    <name evidence="1" type="primary">mnmG</name>
    <name evidence="1" type="synonym">gidA</name>
    <name type="ordered locus">PG_1992</name>
</gene>
<evidence type="ECO:0000255" key="1">
    <source>
        <dbReference type="HAMAP-Rule" id="MF_00129"/>
    </source>
</evidence>
<proteinExistence type="inferred from homology"/>
<name>MNMG_PORGI</name>
<organism>
    <name type="scientific">Porphyromonas gingivalis (strain ATCC BAA-308 / W83)</name>
    <dbReference type="NCBI Taxonomy" id="242619"/>
    <lineage>
        <taxon>Bacteria</taxon>
        <taxon>Pseudomonadati</taxon>
        <taxon>Bacteroidota</taxon>
        <taxon>Bacteroidia</taxon>
        <taxon>Bacteroidales</taxon>
        <taxon>Porphyromonadaceae</taxon>
        <taxon>Porphyromonas</taxon>
    </lineage>
</organism>
<protein>
    <recommendedName>
        <fullName evidence="1">tRNA uridine 5-carboxymethylaminomethyl modification enzyme MnmG</fullName>
    </recommendedName>
    <alternativeName>
        <fullName evidence="1">Glucose-inhibited division protein A</fullName>
    </alternativeName>
</protein>
<reference key="1">
    <citation type="journal article" date="2003" name="J. Bacteriol.">
        <title>Complete genome sequence of the oral pathogenic bacterium Porphyromonas gingivalis strain W83.</title>
        <authorList>
            <person name="Nelson K.E."/>
            <person name="Fleischmann R.D."/>
            <person name="DeBoy R.T."/>
            <person name="Paulsen I.T."/>
            <person name="Fouts D.E."/>
            <person name="Eisen J.A."/>
            <person name="Daugherty S.C."/>
            <person name="Dodson R.J."/>
            <person name="Durkin A.S."/>
            <person name="Gwinn M.L."/>
            <person name="Haft D.H."/>
            <person name="Kolonay J.F."/>
            <person name="Nelson W.C."/>
            <person name="Mason T.M."/>
            <person name="Tallon L."/>
            <person name="Gray J."/>
            <person name="Granger D."/>
            <person name="Tettelin H."/>
            <person name="Dong H."/>
            <person name="Galvin J.L."/>
            <person name="Duncan M.J."/>
            <person name="Dewhirst F.E."/>
            <person name="Fraser C.M."/>
        </authorList>
    </citation>
    <scope>NUCLEOTIDE SEQUENCE [LARGE SCALE GENOMIC DNA]</scope>
    <source>
        <strain>ATCC BAA-308 / W83</strain>
    </source>
</reference>
<dbReference type="EMBL" id="AE015924">
    <property type="protein sequence ID" value="AAQ66963.1"/>
    <property type="molecule type" value="Genomic_DNA"/>
</dbReference>
<dbReference type="RefSeq" id="WP_005874915.1">
    <property type="nucleotide sequence ID" value="NC_002950.2"/>
</dbReference>
<dbReference type="SMR" id="Q7MTG9"/>
<dbReference type="STRING" id="242619.PG_1992"/>
<dbReference type="EnsemblBacteria" id="AAQ66963">
    <property type="protein sequence ID" value="AAQ66963"/>
    <property type="gene ID" value="PG_1992"/>
</dbReference>
<dbReference type="KEGG" id="pgi:PG_1992"/>
<dbReference type="PATRIC" id="fig|242619.8.peg.1847"/>
<dbReference type="eggNOG" id="COG0445">
    <property type="taxonomic scope" value="Bacteria"/>
</dbReference>
<dbReference type="HOGENOM" id="CLU_007831_2_2_10"/>
<dbReference type="BioCyc" id="PGIN242619:G1G02-1864-MONOMER"/>
<dbReference type="Proteomes" id="UP000000588">
    <property type="component" value="Chromosome"/>
</dbReference>
<dbReference type="GO" id="GO:0005829">
    <property type="term" value="C:cytosol"/>
    <property type="evidence" value="ECO:0007669"/>
    <property type="project" value="TreeGrafter"/>
</dbReference>
<dbReference type="GO" id="GO:0050660">
    <property type="term" value="F:flavin adenine dinucleotide binding"/>
    <property type="evidence" value="ECO:0007669"/>
    <property type="project" value="UniProtKB-UniRule"/>
</dbReference>
<dbReference type="GO" id="GO:0030488">
    <property type="term" value="P:tRNA methylation"/>
    <property type="evidence" value="ECO:0007669"/>
    <property type="project" value="TreeGrafter"/>
</dbReference>
<dbReference type="GO" id="GO:0002098">
    <property type="term" value="P:tRNA wobble uridine modification"/>
    <property type="evidence" value="ECO:0007669"/>
    <property type="project" value="InterPro"/>
</dbReference>
<dbReference type="FunFam" id="1.10.10.1800:FF:000003">
    <property type="entry name" value="tRNA uridine 5-carboxymethylaminomethyl modification enzyme MnmG"/>
    <property type="match status" value="1"/>
</dbReference>
<dbReference type="FunFam" id="1.10.150.570:FF:000001">
    <property type="entry name" value="tRNA uridine 5-carboxymethylaminomethyl modification enzyme MnmG"/>
    <property type="match status" value="1"/>
</dbReference>
<dbReference type="FunFam" id="3.50.50.60:FF:000002">
    <property type="entry name" value="tRNA uridine 5-carboxymethylaminomethyl modification enzyme MnmG"/>
    <property type="match status" value="1"/>
</dbReference>
<dbReference type="Gene3D" id="3.50.50.60">
    <property type="entry name" value="FAD/NAD(P)-binding domain"/>
    <property type="match status" value="2"/>
</dbReference>
<dbReference type="Gene3D" id="1.10.150.570">
    <property type="entry name" value="GidA associated domain, C-terminal subdomain"/>
    <property type="match status" value="1"/>
</dbReference>
<dbReference type="Gene3D" id="1.10.10.1800">
    <property type="entry name" value="tRNA uridine 5-carboxymethylaminomethyl modification enzyme MnmG/GidA"/>
    <property type="match status" value="1"/>
</dbReference>
<dbReference type="HAMAP" id="MF_00129">
    <property type="entry name" value="MnmG_GidA"/>
    <property type="match status" value="1"/>
</dbReference>
<dbReference type="InterPro" id="IPR036188">
    <property type="entry name" value="FAD/NAD-bd_sf"/>
</dbReference>
<dbReference type="InterPro" id="IPR049312">
    <property type="entry name" value="GIDA_C_N"/>
</dbReference>
<dbReference type="InterPro" id="IPR004416">
    <property type="entry name" value="MnmG"/>
</dbReference>
<dbReference type="InterPro" id="IPR002218">
    <property type="entry name" value="MnmG-rel"/>
</dbReference>
<dbReference type="InterPro" id="IPR020595">
    <property type="entry name" value="MnmG-rel_CS"/>
</dbReference>
<dbReference type="InterPro" id="IPR026904">
    <property type="entry name" value="MnmG_C"/>
</dbReference>
<dbReference type="InterPro" id="IPR047001">
    <property type="entry name" value="MnmG_C_subdom"/>
</dbReference>
<dbReference type="InterPro" id="IPR044920">
    <property type="entry name" value="MnmG_C_subdom_sf"/>
</dbReference>
<dbReference type="InterPro" id="IPR040131">
    <property type="entry name" value="MnmG_N"/>
</dbReference>
<dbReference type="NCBIfam" id="TIGR00136">
    <property type="entry name" value="mnmG_gidA"/>
    <property type="match status" value="1"/>
</dbReference>
<dbReference type="PANTHER" id="PTHR11806">
    <property type="entry name" value="GLUCOSE INHIBITED DIVISION PROTEIN A"/>
    <property type="match status" value="1"/>
</dbReference>
<dbReference type="PANTHER" id="PTHR11806:SF0">
    <property type="entry name" value="PROTEIN MTO1 HOMOLOG, MITOCHONDRIAL"/>
    <property type="match status" value="1"/>
</dbReference>
<dbReference type="Pfam" id="PF01134">
    <property type="entry name" value="GIDA"/>
    <property type="match status" value="1"/>
</dbReference>
<dbReference type="Pfam" id="PF21680">
    <property type="entry name" value="GIDA_C_1st"/>
    <property type="match status" value="1"/>
</dbReference>
<dbReference type="Pfam" id="PF13932">
    <property type="entry name" value="SAM_GIDA_C"/>
    <property type="match status" value="1"/>
</dbReference>
<dbReference type="SMART" id="SM01228">
    <property type="entry name" value="GIDA_assoc_3"/>
    <property type="match status" value="1"/>
</dbReference>
<dbReference type="SUPFAM" id="SSF51905">
    <property type="entry name" value="FAD/NAD(P)-binding domain"/>
    <property type="match status" value="1"/>
</dbReference>
<dbReference type="PROSITE" id="PS01280">
    <property type="entry name" value="GIDA_1"/>
    <property type="match status" value="1"/>
</dbReference>
<dbReference type="PROSITE" id="PS01281">
    <property type="entry name" value="GIDA_2"/>
    <property type="match status" value="1"/>
</dbReference>
<comment type="function">
    <text evidence="1">NAD-binding protein involved in the addition of a carboxymethylaminomethyl (cmnm) group at the wobble position (U34) of certain tRNAs, forming tRNA-cmnm(5)s(2)U34.</text>
</comment>
<comment type="cofactor">
    <cofactor evidence="1">
        <name>FAD</name>
        <dbReference type="ChEBI" id="CHEBI:57692"/>
    </cofactor>
</comment>
<comment type="subunit">
    <text evidence="1">Homodimer. Heterotetramer of two MnmE and two MnmG subunits.</text>
</comment>
<comment type="subcellular location">
    <subcellularLocation>
        <location evidence="1">Cytoplasm</location>
    </subcellularLocation>
</comment>
<comment type="similarity">
    <text evidence="1">Belongs to the MnmG family.</text>
</comment>
<sequence>MQFNYDVIVVGAGHAGCEAAAAAAKLGSQVLLITPDMNKIAQMSCNPAVGGIAKGQIVREIDALGGRMGIVTDATAIQFRMLNRSKGPAMWSPRAQSDRMRFMEAWRDIVEHEPNLYMWQDSVRCLSIRQGAVAGVVTALGVEFQARTVVLTTGTFLGGVMHFGERMIEGGRIAEPAFHGITEQLRDLGFRTDRMKTGTPARIDGRSIDFSLTTEQSGEEDHHRFSYMDTPRRVLRQRSCYALYTNPECHEILSKGLDRSPLYNGQIQSIGPRYCPSIETKIVTFADKEMHQLFLEPEGETSNEFYLNGFSSSLPLEIQLEALKAIPALRHVHIYRPGYAIEYDFFDPTQLRHTLETKPVKGLFFAGQINGTTGYEEAAGQGLIAGINAHLHCHGAGEFTLGRDEAYIGVLIDDLVSKGVDEPYRMFTSRAEYRILLRQDDADMRLTPKAEAIGLADSRRSELLREKQVFRDKLIDFTHKFSLKPDLINPHLESAGHLPLKQGIKLYDLLLRPQIGMNEVCSMVPSLQRIVEEIPASRREEIVEAAEILIKYDGYIKRERALADKINRLESIRLPQHVDYMQMQSLSTEARQKLTSIRPETIAQASRIPGVSPHDVSILLVLCGR</sequence>